<gene>
    <name evidence="1" type="primary">argP</name>
    <name type="synonym">iciA</name>
    <name type="ordered locus">SeD_A3404</name>
</gene>
<name>ARGP_SALDC</name>
<sequence length="297" mass="33537">MKRPDYRTLQALDAVIRERGFERAAQKLCITQSAVSQRIKQLENMFGQPLLVRTVPPRPTEQGQKLLALLRQVELLEEEWLGDEQTGSTPLLLSLAVNADSLATWLLPALAPVLADSPIRLNLQVEDETRTQERLRRGEVVGAVSIQHQALPSCLVDKLGALDYLFVASRPFAERYFPNGVTRSSLLKAPAVAFDHLDDMHQAFLQQNFDLPPGSVPCHIVNSSEAFVQLARQGTTCCMIPHLQIEKELESGELINLTPGLLQRRMLYWHRFAPESRMMRKVTDALLEYGHKVLRQD</sequence>
<protein>
    <recommendedName>
        <fullName evidence="1">HTH-type transcriptional regulator ArgP</fullName>
    </recommendedName>
</protein>
<accession>B5FUH7</accession>
<feature type="chain" id="PRO_1000127279" description="HTH-type transcriptional regulator ArgP">
    <location>
        <begin position="1"/>
        <end position="297"/>
    </location>
</feature>
<feature type="domain" description="HTH lysR-type" evidence="1">
    <location>
        <begin position="4"/>
        <end position="60"/>
    </location>
</feature>
<feature type="DNA-binding region" description="H-T-H motif" evidence="1">
    <location>
        <begin position="21"/>
        <end position="40"/>
    </location>
</feature>
<dbReference type="EMBL" id="CP001144">
    <property type="protein sequence ID" value="ACH77059.1"/>
    <property type="molecule type" value="Genomic_DNA"/>
</dbReference>
<dbReference type="RefSeq" id="WP_000828348.1">
    <property type="nucleotide sequence ID" value="NC_011205.1"/>
</dbReference>
<dbReference type="SMR" id="B5FUH7"/>
<dbReference type="KEGG" id="sed:SeD_A3404"/>
<dbReference type="HOGENOM" id="CLU_063829_0_0_6"/>
<dbReference type="Proteomes" id="UP000008322">
    <property type="component" value="Chromosome"/>
</dbReference>
<dbReference type="GO" id="GO:0003677">
    <property type="term" value="F:DNA binding"/>
    <property type="evidence" value="ECO:0007669"/>
    <property type="project" value="UniProtKB-UniRule"/>
</dbReference>
<dbReference type="GO" id="GO:0003700">
    <property type="term" value="F:DNA-binding transcription factor activity"/>
    <property type="evidence" value="ECO:0007669"/>
    <property type="project" value="UniProtKB-UniRule"/>
</dbReference>
<dbReference type="CDD" id="cd08428">
    <property type="entry name" value="PBP2_IciA_ArgP"/>
    <property type="match status" value="1"/>
</dbReference>
<dbReference type="FunFam" id="1.10.10.10:FF:000061">
    <property type="entry name" value="HTH-type transcriptional regulator ArgP"/>
    <property type="match status" value="1"/>
</dbReference>
<dbReference type="FunFam" id="3.40.190.290:FF:000002">
    <property type="entry name" value="HTH-type transcriptional regulator ArgP"/>
    <property type="match status" value="1"/>
</dbReference>
<dbReference type="Gene3D" id="3.40.190.290">
    <property type="match status" value="1"/>
</dbReference>
<dbReference type="Gene3D" id="1.10.10.10">
    <property type="entry name" value="Winged helix-like DNA-binding domain superfamily/Winged helix DNA-binding domain"/>
    <property type="match status" value="1"/>
</dbReference>
<dbReference type="HAMAP" id="MF_00513">
    <property type="entry name" value="HTH_type_ArgP"/>
    <property type="match status" value="1"/>
</dbReference>
<dbReference type="InterPro" id="IPR017685">
    <property type="entry name" value="ArgP"/>
</dbReference>
<dbReference type="InterPro" id="IPR023490">
    <property type="entry name" value="ArgP_gammaproteobact"/>
</dbReference>
<dbReference type="InterPro" id="IPR050176">
    <property type="entry name" value="LTTR"/>
</dbReference>
<dbReference type="InterPro" id="IPR005119">
    <property type="entry name" value="LysR_subst-bd"/>
</dbReference>
<dbReference type="InterPro" id="IPR000847">
    <property type="entry name" value="Tscrpt_reg_HTH_LysR"/>
</dbReference>
<dbReference type="InterPro" id="IPR036388">
    <property type="entry name" value="WH-like_DNA-bd_sf"/>
</dbReference>
<dbReference type="InterPro" id="IPR036390">
    <property type="entry name" value="WH_DNA-bd_sf"/>
</dbReference>
<dbReference type="NCBIfam" id="TIGR03298">
    <property type="entry name" value="argP"/>
    <property type="match status" value="1"/>
</dbReference>
<dbReference type="NCBIfam" id="NF002964">
    <property type="entry name" value="PRK03635.1"/>
    <property type="match status" value="1"/>
</dbReference>
<dbReference type="NCBIfam" id="NF009888">
    <property type="entry name" value="PRK13348.1"/>
    <property type="match status" value="1"/>
</dbReference>
<dbReference type="PANTHER" id="PTHR30579:SF2">
    <property type="entry name" value="HTH-TYPE TRANSCRIPTIONAL REGULATOR ARGP"/>
    <property type="match status" value="1"/>
</dbReference>
<dbReference type="PANTHER" id="PTHR30579">
    <property type="entry name" value="TRANSCRIPTIONAL REGULATOR"/>
    <property type="match status" value="1"/>
</dbReference>
<dbReference type="Pfam" id="PF00126">
    <property type="entry name" value="HTH_1"/>
    <property type="match status" value="1"/>
</dbReference>
<dbReference type="Pfam" id="PF03466">
    <property type="entry name" value="LysR_substrate"/>
    <property type="match status" value="1"/>
</dbReference>
<dbReference type="PRINTS" id="PR00039">
    <property type="entry name" value="HTHLYSR"/>
</dbReference>
<dbReference type="SUPFAM" id="SSF53850">
    <property type="entry name" value="Periplasmic binding protein-like II"/>
    <property type="match status" value="1"/>
</dbReference>
<dbReference type="SUPFAM" id="SSF46785">
    <property type="entry name" value="Winged helix' DNA-binding domain"/>
    <property type="match status" value="1"/>
</dbReference>
<dbReference type="PROSITE" id="PS50931">
    <property type="entry name" value="HTH_LYSR"/>
    <property type="match status" value="1"/>
</dbReference>
<evidence type="ECO:0000255" key="1">
    <source>
        <dbReference type="HAMAP-Rule" id="MF_00513"/>
    </source>
</evidence>
<evidence type="ECO:0000305" key="2"/>
<reference key="1">
    <citation type="journal article" date="2011" name="J. Bacteriol.">
        <title>Comparative genomics of 28 Salmonella enterica isolates: evidence for CRISPR-mediated adaptive sublineage evolution.</title>
        <authorList>
            <person name="Fricke W.F."/>
            <person name="Mammel M.K."/>
            <person name="McDermott P.F."/>
            <person name="Tartera C."/>
            <person name="White D.G."/>
            <person name="Leclerc J.E."/>
            <person name="Ravel J."/>
            <person name="Cebula T.A."/>
        </authorList>
    </citation>
    <scope>NUCLEOTIDE SEQUENCE [LARGE SCALE GENOMIC DNA]</scope>
    <source>
        <strain>CT_02021853</strain>
    </source>
</reference>
<keyword id="KW-0238">DNA-binding</keyword>
<keyword id="KW-0804">Transcription</keyword>
<keyword id="KW-0805">Transcription regulation</keyword>
<organism>
    <name type="scientific">Salmonella dublin (strain CT_02021853)</name>
    <dbReference type="NCBI Taxonomy" id="439851"/>
    <lineage>
        <taxon>Bacteria</taxon>
        <taxon>Pseudomonadati</taxon>
        <taxon>Pseudomonadota</taxon>
        <taxon>Gammaproteobacteria</taxon>
        <taxon>Enterobacterales</taxon>
        <taxon>Enterobacteriaceae</taxon>
        <taxon>Salmonella</taxon>
    </lineage>
</organism>
<comment type="function">
    <text evidence="1">Controls the transcription of genes involved in arginine and lysine metabolism.</text>
</comment>
<comment type="subunit">
    <text evidence="1">Homodimer.</text>
</comment>
<comment type="similarity">
    <text evidence="2">Belongs to the LysR transcriptional regulatory family.</text>
</comment>
<proteinExistence type="inferred from homology"/>